<keyword id="KW-0012">Acyltransferase</keyword>
<keyword id="KW-0028">Amino-acid biosynthesis</keyword>
<keyword id="KW-0963">Cytoplasm</keyword>
<keyword id="KW-0486">Methionine biosynthesis</keyword>
<keyword id="KW-1185">Reference proteome</keyword>
<keyword id="KW-0808">Transferase</keyword>
<proteinExistence type="evidence at protein level"/>
<sequence>MSDASEKLAQSVLSRSVGIVEPKTARFSEPLALDCGRSLPSYELVYETYGQLNDEGSNAVLICHALSGDHHAAGFHAETDRKPGWWDSAIGPGKPIDTDRFFVVCLNNLGGCKGSTGPLSVDPASGKPYGPDFPIVTVKDWVHAQYRLMQYLGLSGWAAVIGGSLGGMQVLQWSITYPDAVAHAVVIAAAPRLSAQNIAFNEVARQAIITDPEFYGGRYADHNALPRRGLMLARMLGHITYLSDDAMRAKFGRELRAGQVQYGFDVEFQVESYLRYQGTSFVDRFDANTYLLMTKALDYFDPAQASNDDLVAALAEVKAHFLVVSFTSDWRFSPERSREIVRALLASGKQVSYAEIESNHGHDAFLMTIPYYHRVLAGYMANIDFASTPRGVSSPVYSTGGAV</sequence>
<reference key="1">
    <citation type="submission" date="2009-10" db="EMBL/GenBank/DDBJ databases">
        <title>Complete sequence of Halothiobacillus neapolitanus c2.</title>
        <authorList>
            <consortium name="US DOE Joint Genome Institute"/>
            <person name="Lucas S."/>
            <person name="Copeland A."/>
            <person name="Lapidus A."/>
            <person name="Glavina del Rio T."/>
            <person name="Tice H."/>
            <person name="Bruce D."/>
            <person name="Goodwin L."/>
            <person name="Pitluck S."/>
            <person name="Davenport K."/>
            <person name="Brettin T."/>
            <person name="Detter J.C."/>
            <person name="Han C."/>
            <person name="Tapia R."/>
            <person name="Larimer F."/>
            <person name="Land M."/>
            <person name="Hauser L."/>
            <person name="Kyrpides N."/>
            <person name="Mikhailova N."/>
            <person name="Kerfeld C."/>
            <person name="Cannon G."/>
            <person name="Heinhort S."/>
        </authorList>
    </citation>
    <scope>NUCLEOTIDE SEQUENCE [LARGE SCALE GENOMIC DNA]</scope>
    <source>
        <strain>ATCC 23641 / c2</strain>
    </source>
</reference>
<reference key="2">
    <citation type="journal article" date="2017" name="Nat. Chem. Biol.">
        <title>Parallel evolution of non-homologous isofunctional enzymes in methionine biosynthesis.</title>
        <authorList>
            <person name="Bastard K."/>
            <person name="Perret A."/>
            <person name="Mariage A."/>
            <person name="Bessonnet T."/>
            <person name="Pinet-Turpault A."/>
            <person name="Petit J.L."/>
            <person name="Darii E."/>
            <person name="Bazire P."/>
            <person name="Vergne-Vaxelaire C."/>
            <person name="Brewee C."/>
            <person name="Debard A."/>
            <person name="Pellouin V."/>
            <person name="Besnard-Gonnet M."/>
            <person name="Artiguenave F."/>
            <person name="Medigue C."/>
            <person name="Vallenet D."/>
            <person name="Danchin A."/>
            <person name="Zaparucha A."/>
            <person name="Weissenbach J."/>
            <person name="Salanoubat M."/>
            <person name="de Berardinis V."/>
        </authorList>
    </citation>
    <scope>FUNCTION</scope>
    <scope>CATALYTIC ACTIVITY</scope>
</reference>
<organism>
    <name type="scientific">Halothiobacillus neapolitanus (strain ATCC 23641 / c2)</name>
    <name type="common">Thiobacillus neapolitanus</name>
    <dbReference type="NCBI Taxonomy" id="555778"/>
    <lineage>
        <taxon>Bacteria</taxon>
        <taxon>Pseudomonadati</taxon>
        <taxon>Pseudomonadota</taxon>
        <taxon>Gammaproteobacteria</taxon>
        <taxon>Chromatiales</taxon>
        <taxon>Halothiobacillaceae</taxon>
        <taxon>Halothiobacillus</taxon>
    </lineage>
</organism>
<evidence type="ECO:0000255" key="1">
    <source>
        <dbReference type="HAMAP-Rule" id="MF_00296"/>
    </source>
</evidence>
<evidence type="ECO:0000269" key="2">
    <source>
    </source>
</evidence>
<evidence type="ECO:0000303" key="3">
    <source>
    </source>
</evidence>
<evidence type="ECO:0000305" key="4">
    <source>
    </source>
</evidence>
<evidence type="ECO:0000312" key="5">
    <source>
        <dbReference type="EMBL" id="ACX96659.1"/>
    </source>
</evidence>
<accession>D0L1T6</accession>
<dbReference type="EC" id="2.3.1.46" evidence="1 2"/>
<dbReference type="EMBL" id="CP001801">
    <property type="protein sequence ID" value="ACX96659.1"/>
    <property type="molecule type" value="Genomic_DNA"/>
</dbReference>
<dbReference type="RefSeq" id="WP_012824692.1">
    <property type="nucleotide sequence ID" value="NC_013422.1"/>
</dbReference>
<dbReference type="SMR" id="D0L1T6"/>
<dbReference type="STRING" id="555778.Hneap_1837"/>
<dbReference type="ESTHER" id="halnc-metxs">
    <property type="family name" value="Homoserine_transacetylase"/>
</dbReference>
<dbReference type="KEGG" id="hna:Hneap_1837"/>
<dbReference type="eggNOG" id="COG2021">
    <property type="taxonomic scope" value="Bacteria"/>
</dbReference>
<dbReference type="HOGENOM" id="CLU_028760_1_2_6"/>
<dbReference type="OrthoDB" id="9800754at2"/>
<dbReference type="UniPathway" id="UPA00051">
    <property type="reaction ID" value="UER00075"/>
</dbReference>
<dbReference type="Proteomes" id="UP000009102">
    <property type="component" value="Chromosome"/>
</dbReference>
<dbReference type="GO" id="GO:0005737">
    <property type="term" value="C:cytoplasm"/>
    <property type="evidence" value="ECO:0007669"/>
    <property type="project" value="UniProtKB-SubCell"/>
</dbReference>
<dbReference type="GO" id="GO:0004414">
    <property type="term" value="F:homoserine O-acetyltransferase activity"/>
    <property type="evidence" value="ECO:0007669"/>
    <property type="project" value="TreeGrafter"/>
</dbReference>
<dbReference type="GO" id="GO:0008899">
    <property type="term" value="F:homoserine O-succinyltransferase activity"/>
    <property type="evidence" value="ECO:0007669"/>
    <property type="project" value="UniProtKB-UniRule"/>
</dbReference>
<dbReference type="GO" id="GO:0009092">
    <property type="term" value="P:homoserine metabolic process"/>
    <property type="evidence" value="ECO:0007669"/>
    <property type="project" value="TreeGrafter"/>
</dbReference>
<dbReference type="GO" id="GO:0009086">
    <property type="term" value="P:methionine biosynthetic process"/>
    <property type="evidence" value="ECO:0007669"/>
    <property type="project" value="UniProtKB-UniRule"/>
</dbReference>
<dbReference type="FunFam" id="1.10.1740.110:FF:000001">
    <property type="entry name" value="Homoserine O-acetyltransferase"/>
    <property type="match status" value="1"/>
</dbReference>
<dbReference type="Gene3D" id="1.10.1740.110">
    <property type="match status" value="1"/>
</dbReference>
<dbReference type="Gene3D" id="3.40.50.1820">
    <property type="entry name" value="alpha/beta hydrolase"/>
    <property type="match status" value="1"/>
</dbReference>
<dbReference type="HAMAP" id="MF_00296">
    <property type="entry name" value="MetX_acyltransf"/>
    <property type="match status" value="1"/>
</dbReference>
<dbReference type="InterPro" id="IPR000073">
    <property type="entry name" value="AB_hydrolase_1"/>
</dbReference>
<dbReference type="InterPro" id="IPR029058">
    <property type="entry name" value="AB_hydrolase_fold"/>
</dbReference>
<dbReference type="InterPro" id="IPR008220">
    <property type="entry name" value="HAT_MetX-like"/>
</dbReference>
<dbReference type="NCBIfam" id="TIGR01392">
    <property type="entry name" value="homoserO_Ac_trn"/>
    <property type="match status" value="1"/>
</dbReference>
<dbReference type="NCBIfam" id="NF001209">
    <property type="entry name" value="PRK00175.1"/>
    <property type="match status" value="1"/>
</dbReference>
<dbReference type="PANTHER" id="PTHR32268">
    <property type="entry name" value="HOMOSERINE O-ACETYLTRANSFERASE"/>
    <property type="match status" value="1"/>
</dbReference>
<dbReference type="PANTHER" id="PTHR32268:SF11">
    <property type="entry name" value="HOMOSERINE O-ACETYLTRANSFERASE"/>
    <property type="match status" value="1"/>
</dbReference>
<dbReference type="Pfam" id="PF00561">
    <property type="entry name" value="Abhydrolase_1"/>
    <property type="match status" value="1"/>
</dbReference>
<dbReference type="PIRSF" id="PIRSF000443">
    <property type="entry name" value="Homoser_Ac_trans"/>
    <property type="match status" value="1"/>
</dbReference>
<dbReference type="SUPFAM" id="SSF53474">
    <property type="entry name" value="alpha/beta-Hydrolases"/>
    <property type="match status" value="1"/>
</dbReference>
<protein>
    <recommendedName>
        <fullName evidence="1">Homoserine O-succinyltransferase</fullName>
        <shortName evidence="1 3">HST</shortName>
        <ecNumber evidence="1 2">2.3.1.46</ecNumber>
    </recommendedName>
    <alternativeName>
        <fullName evidence="1">Homoserine transsuccinylase</fullName>
        <shortName evidence="1">HTS</shortName>
    </alternativeName>
</protein>
<gene>
    <name evidence="1 3" type="primary">metXS</name>
    <name evidence="5" type="ordered locus">Hneap_1837</name>
</gene>
<feature type="chain" id="PRO_0000440303" description="Homoserine O-succinyltransferase">
    <location>
        <begin position="1"/>
        <end position="403"/>
    </location>
</feature>
<feature type="domain" description="AB hydrolase-1" evidence="1">
    <location>
        <begin position="58"/>
        <end position="366"/>
    </location>
</feature>
<feature type="active site" description="Nucleophile" evidence="1">
    <location>
        <position position="164"/>
    </location>
</feature>
<feature type="active site" evidence="1">
    <location>
        <position position="329"/>
    </location>
</feature>
<feature type="active site" evidence="1">
    <location>
        <position position="362"/>
    </location>
</feature>
<feature type="binding site" evidence="1">
    <location>
        <position position="234"/>
    </location>
    <ligand>
        <name>substrate</name>
    </ligand>
</feature>
<feature type="binding site" evidence="1">
    <location>
        <position position="363"/>
    </location>
    <ligand>
        <name>substrate</name>
    </ligand>
</feature>
<feature type="site" description="Important for acyl-CoA specificity" evidence="1 4">
    <location>
        <position position="331"/>
    </location>
</feature>
<name>METXS_HALNC</name>
<comment type="function">
    <text evidence="1 2">Transfers a succinyl group from succinyl-CoA to L-homoserine, forming succinyl-L-homoserine.</text>
</comment>
<comment type="catalytic activity">
    <reaction evidence="1 2">
        <text>L-homoserine + succinyl-CoA = O-succinyl-L-homoserine + CoA</text>
        <dbReference type="Rhea" id="RHEA:22008"/>
        <dbReference type="ChEBI" id="CHEBI:57287"/>
        <dbReference type="ChEBI" id="CHEBI:57292"/>
        <dbReference type="ChEBI" id="CHEBI:57476"/>
        <dbReference type="ChEBI" id="CHEBI:57661"/>
        <dbReference type="EC" id="2.3.1.46"/>
    </reaction>
</comment>
<comment type="pathway">
    <text evidence="1">Amino-acid biosynthesis; L-methionine biosynthesis via de novo pathway; O-succinyl-L-homoserine from L-homoserine: step 1/1.</text>
</comment>
<comment type="subunit">
    <text evidence="1">Homodimer.</text>
</comment>
<comment type="subcellular location">
    <subcellularLocation>
        <location evidence="1">Cytoplasm</location>
    </subcellularLocation>
</comment>
<comment type="similarity">
    <text evidence="1">Belongs to the AB hydrolase superfamily. MetX family.</text>
</comment>